<name>KUP1_BRASB</name>
<sequence>MGLRPLMVGALGVVYGDIGTSPLYTMKTALEWAGGADAETALGMLSLIVWTLLITTSIKYVAVVMRADNDGEGGILALMSLLGIKHGERLGVIAMGLIGAALLYGDGAITPAISVLSALEGLKSPLPQISPYIVTLSAIILVGLFALQAQGTDRIGKLFGPVMIAWFIVIGILGLFGILRHPSVLAALDPRHGLSYLFSHGMTGFLVLGAVFLCATGAEALYADMGHFGARPIRFAWYGLVLPCLILNYAGQTAVVVDAALGQEPNPFFALCPAALQLPLVALATVATIIASQAIISGAFSMTRQAIQLGLCPRLNIAQTSATGYGQIYIGFVNWTLMALTLGLTLGFRSSDNLAAAFGIAVSLTMLLTSILMFLTMREIWKWNLAASLLTAGLFVVVDMSFVSANLMKVLEGGWFPLVVAAVIFFLMMTWHQGRDLLVKKLERDTLPLATFIAQVGAKTRVPGTAVYMTSRLDVVPVPLLHNLKHNKVLHDRIVLLRVVTASTPRVAPDLRIDVEHVGSNFHTMTVRYGFMEQPDVPEALDQCRQRGLIFNMMETSFFVGRVKIVAERRSRFAAFQAHLFEIMHRNAMAATEFFRIPPNRVIELGGQVEI</sequence>
<keyword id="KW-0997">Cell inner membrane</keyword>
<keyword id="KW-1003">Cell membrane</keyword>
<keyword id="KW-0406">Ion transport</keyword>
<keyword id="KW-0472">Membrane</keyword>
<keyword id="KW-0630">Potassium</keyword>
<keyword id="KW-0633">Potassium transport</keyword>
<keyword id="KW-1185">Reference proteome</keyword>
<keyword id="KW-0769">Symport</keyword>
<keyword id="KW-0812">Transmembrane</keyword>
<keyword id="KW-1133">Transmembrane helix</keyword>
<keyword id="KW-0813">Transport</keyword>
<proteinExistence type="inferred from homology"/>
<reference key="1">
    <citation type="journal article" date="2007" name="Science">
        <title>Legumes symbioses: absence of nod genes in photosynthetic bradyrhizobia.</title>
        <authorList>
            <person name="Giraud E."/>
            <person name="Moulin L."/>
            <person name="Vallenet D."/>
            <person name="Barbe V."/>
            <person name="Cytryn E."/>
            <person name="Avarre J.-C."/>
            <person name="Jaubert M."/>
            <person name="Simon D."/>
            <person name="Cartieaux F."/>
            <person name="Prin Y."/>
            <person name="Bena G."/>
            <person name="Hannibal L."/>
            <person name="Fardoux J."/>
            <person name="Kojadinovic M."/>
            <person name="Vuillet L."/>
            <person name="Lajus A."/>
            <person name="Cruveiller S."/>
            <person name="Rouy Z."/>
            <person name="Mangenot S."/>
            <person name="Segurens B."/>
            <person name="Dossat C."/>
            <person name="Franck W.L."/>
            <person name="Chang W.-S."/>
            <person name="Saunders E."/>
            <person name="Bruce D."/>
            <person name="Richardson P."/>
            <person name="Normand P."/>
            <person name="Dreyfus B."/>
            <person name="Pignol D."/>
            <person name="Stacey G."/>
            <person name="Emerich D."/>
            <person name="Vermeglio A."/>
            <person name="Medigue C."/>
            <person name="Sadowsky M."/>
        </authorList>
    </citation>
    <scope>NUCLEOTIDE SEQUENCE [LARGE SCALE GENOMIC DNA]</scope>
    <source>
        <strain>BTAi1 / ATCC BAA-1182</strain>
    </source>
</reference>
<protein>
    <recommendedName>
        <fullName evidence="1">Probable potassium transport system protein Kup 1</fullName>
    </recommendedName>
</protein>
<gene>
    <name evidence="1" type="primary">kup1</name>
    <name type="ordered locus">BBta_3454</name>
</gene>
<comment type="function">
    <text evidence="1">Transport of potassium into the cell. Likely operates as a K(+):H(+) symporter.</text>
</comment>
<comment type="catalytic activity">
    <reaction evidence="1">
        <text>K(+)(in) + H(+)(in) = K(+)(out) + H(+)(out)</text>
        <dbReference type="Rhea" id="RHEA:28490"/>
        <dbReference type="ChEBI" id="CHEBI:15378"/>
        <dbReference type="ChEBI" id="CHEBI:29103"/>
    </reaction>
    <physiologicalReaction direction="right-to-left" evidence="1">
        <dbReference type="Rhea" id="RHEA:28492"/>
    </physiologicalReaction>
</comment>
<comment type="subcellular location">
    <subcellularLocation>
        <location evidence="1">Cell inner membrane</location>
        <topology evidence="1">Multi-pass membrane protein</topology>
    </subcellularLocation>
</comment>
<comment type="similarity">
    <text evidence="1">Belongs to the HAK/KUP transporter (TC 2.A.72) family.</text>
</comment>
<accession>A5EHA3</accession>
<dbReference type="EMBL" id="CP000494">
    <property type="protein sequence ID" value="ABQ35547.1"/>
    <property type="molecule type" value="Genomic_DNA"/>
</dbReference>
<dbReference type="STRING" id="288000.BBta_3454"/>
<dbReference type="KEGG" id="bbt:BBta_3454"/>
<dbReference type="eggNOG" id="COG3158">
    <property type="taxonomic scope" value="Bacteria"/>
</dbReference>
<dbReference type="HOGENOM" id="CLU_008142_4_2_5"/>
<dbReference type="OrthoDB" id="9805577at2"/>
<dbReference type="Proteomes" id="UP000000246">
    <property type="component" value="Chromosome"/>
</dbReference>
<dbReference type="GO" id="GO:0005886">
    <property type="term" value="C:plasma membrane"/>
    <property type="evidence" value="ECO:0007669"/>
    <property type="project" value="UniProtKB-SubCell"/>
</dbReference>
<dbReference type="GO" id="GO:0015079">
    <property type="term" value="F:potassium ion transmembrane transporter activity"/>
    <property type="evidence" value="ECO:0007669"/>
    <property type="project" value="UniProtKB-UniRule"/>
</dbReference>
<dbReference type="GO" id="GO:0015293">
    <property type="term" value="F:symporter activity"/>
    <property type="evidence" value="ECO:0007669"/>
    <property type="project" value="UniProtKB-UniRule"/>
</dbReference>
<dbReference type="HAMAP" id="MF_01522">
    <property type="entry name" value="Kup"/>
    <property type="match status" value="1"/>
</dbReference>
<dbReference type="InterPro" id="IPR003855">
    <property type="entry name" value="K+_transporter"/>
</dbReference>
<dbReference type="InterPro" id="IPR053952">
    <property type="entry name" value="K_trans_C"/>
</dbReference>
<dbReference type="InterPro" id="IPR053951">
    <property type="entry name" value="K_trans_N"/>
</dbReference>
<dbReference type="InterPro" id="IPR023051">
    <property type="entry name" value="Kup"/>
</dbReference>
<dbReference type="PANTHER" id="PTHR30540:SF79">
    <property type="entry name" value="LOW AFFINITY POTASSIUM TRANSPORT SYSTEM PROTEIN KUP"/>
    <property type="match status" value="1"/>
</dbReference>
<dbReference type="PANTHER" id="PTHR30540">
    <property type="entry name" value="OSMOTIC STRESS POTASSIUM TRANSPORTER"/>
    <property type="match status" value="1"/>
</dbReference>
<dbReference type="Pfam" id="PF02705">
    <property type="entry name" value="K_trans"/>
    <property type="match status" value="1"/>
</dbReference>
<dbReference type="Pfam" id="PF22776">
    <property type="entry name" value="K_trans_C"/>
    <property type="match status" value="1"/>
</dbReference>
<organism>
    <name type="scientific">Bradyrhizobium sp. (strain BTAi1 / ATCC BAA-1182)</name>
    <dbReference type="NCBI Taxonomy" id="288000"/>
    <lineage>
        <taxon>Bacteria</taxon>
        <taxon>Pseudomonadati</taxon>
        <taxon>Pseudomonadota</taxon>
        <taxon>Alphaproteobacteria</taxon>
        <taxon>Hyphomicrobiales</taxon>
        <taxon>Nitrobacteraceae</taxon>
        <taxon>Bradyrhizobium</taxon>
    </lineage>
</organism>
<evidence type="ECO:0000255" key="1">
    <source>
        <dbReference type="HAMAP-Rule" id="MF_01522"/>
    </source>
</evidence>
<feature type="chain" id="PRO_0000296758" description="Probable potassium transport system protein Kup 1">
    <location>
        <begin position="1"/>
        <end position="611"/>
    </location>
</feature>
<feature type="transmembrane region" description="Helical" evidence="1">
    <location>
        <begin position="6"/>
        <end position="26"/>
    </location>
</feature>
<feature type="transmembrane region" description="Helical" evidence="1">
    <location>
        <begin position="44"/>
        <end position="64"/>
    </location>
</feature>
<feature type="transmembrane region" description="Helical" evidence="1">
    <location>
        <begin position="90"/>
        <end position="110"/>
    </location>
</feature>
<feature type="transmembrane region" description="Helical" evidence="1">
    <location>
        <begin position="129"/>
        <end position="149"/>
    </location>
</feature>
<feature type="transmembrane region" description="Helical" evidence="1">
    <location>
        <begin position="158"/>
        <end position="178"/>
    </location>
</feature>
<feature type="transmembrane region" description="Helical" evidence="1">
    <location>
        <begin position="193"/>
        <end position="213"/>
    </location>
</feature>
<feature type="transmembrane region" description="Helical" evidence="1">
    <location>
        <begin position="237"/>
        <end position="257"/>
    </location>
</feature>
<feature type="transmembrane region" description="Helical" evidence="1">
    <location>
        <begin position="280"/>
        <end position="300"/>
    </location>
</feature>
<feature type="transmembrane region" description="Helical" evidence="1">
    <location>
        <begin position="328"/>
        <end position="348"/>
    </location>
</feature>
<feature type="transmembrane region" description="Helical" evidence="1">
    <location>
        <begin position="354"/>
        <end position="374"/>
    </location>
</feature>
<feature type="transmembrane region" description="Helical" evidence="1">
    <location>
        <begin position="385"/>
        <end position="405"/>
    </location>
</feature>
<feature type="transmembrane region" description="Helical" evidence="1">
    <location>
        <begin position="410"/>
        <end position="430"/>
    </location>
</feature>